<protein>
    <recommendedName>
        <fullName>Uncharacterized protein in lig 3'region</fullName>
    </recommendedName>
</protein>
<proteinExistence type="predicted"/>
<reference key="1">
    <citation type="journal article" date="1992" name="Nucleic Acids Res.">
        <title>Molecular characterisation of a DNA ligase gene of the extremely thermophilic archaeon Desulfurolobus ambivalens shows close phylogenetic relationship to eukaryotic ligases.</title>
        <authorList>
            <person name="Kletzin A."/>
        </authorList>
    </citation>
    <scope>NUCLEOTIDE SEQUENCE [GENOMIC DNA]</scope>
    <source>
        <strain>Lei 10 / DSM 3772 / JCM 9191</strain>
    </source>
</reference>
<feature type="chain" id="PRO_0000066292" description="Uncharacterized protein in lig 3'region">
    <location>
        <begin position="1"/>
        <end position="140" status="greater than"/>
    </location>
</feature>
<feature type="non-terminal residue">
    <location>
        <position position="140"/>
    </location>
</feature>
<name>YLG3_ACIAM</name>
<dbReference type="EMBL" id="X63438">
    <property type="protein sequence ID" value="CAA45035.1"/>
    <property type="molecule type" value="Genomic_DNA"/>
</dbReference>
<dbReference type="PIR" id="S26384">
    <property type="entry name" value="S26384"/>
</dbReference>
<dbReference type="SMR" id="Q02102"/>
<dbReference type="Gene3D" id="3.60.15.10">
    <property type="entry name" value="Ribonuclease Z/Hydroxyacylglutathione hydrolase-like"/>
    <property type="match status" value="1"/>
</dbReference>
<dbReference type="InterPro" id="IPR036866">
    <property type="entry name" value="RibonucZ/Hydroxyglut_hydro"/>
</dbReference>
<dbReference type="SUPFAM" id="SSF56281">
    <property type="entry name" value="Metallo-hydrolase/oxidoreductase"/>
    <property type="match status" value="1"/>
</dbReference>
<accession>Q02102</accession>
<sequence>MGISYGVKIAIEDEKIELVQADHVFGAAQVVVTNSNGESVGYTGDFKNPGKGTPILNTDVLIVDTTYGKPTFRRKFRDEVEVLFSDYVNDSLIYGPVRVYAYYGKIQEAMKILRKNGISAPFIVDGKIKEVTDIAIKYGL</sequence>
<organism>
    <name type="scientific">Acidianus ambivalens</name>
    <name type="common">Desulfurolobus ambivalens</name>
    <dbReference type="NCBI Taxonomy" id="2283"/>
    <lineage>
        <taxon>Archaea</taxon>
        <taxon>Thermoproteota</taxon>
        <taxon>Thermoprotei</taxon>
        <taxon>Sulfolobales</taxon>
        <taxon>Sulfolobaceae</taxon>
        <taxon>Acidianus</taxon>
    </lineage>
</organism>